<organismHost>
    <name type="scientific">Homo sapiens</name>
    <name type="common">Human</name>
    <dbReference type="NCBI Taxonomy" id="9606"/>
</organismHost>
<sequence>MSRRLIYVLNINRKSTHKIQENEIYTYFSYCNIDHTSTELDFVVKNYDLNRRQPVTGYTALHCYLYNNYFTNDVLKVLLNHGVDVTIKPSSGHMPIYILLTRCCNISHNVVIDMINKDKTHLSHKDYSNLLLEYIKSRYMLLKEEDIDENIVSTLLDKGIDPNFKQDGYTALHYYYLCLAHVYKPGECRKPITIKKAKRIISLFIQHGANLNALDNCGNTPFHLYLSIEMCNNIHMTKMLLTFNPNFEICNNHGLTPILCYITSDYIQHDILVMLIHHYETNVGEMPIDERRMIVFEFIKTYSTRPLDSITYLMNRFKNIDIHTRYEGKTLLHIACEYNNTHVIDYLIRINGDINALTDNNKHAIQLIIDNKENSQYTIDCLLYILRYIVDKNVIRSLVDQLPYLPIFDIKSFEKFISYCILLDDTFYDRHVQNRDSKTYRYTFSKYISFDKYDSIITKCYEETILLKLSTVLDTTLYSVLRCHNSRKLKRYLSVLKKYNNDKSFKIYSNIMNERYLNVYYKDMYVSKVYDKLFPVFTDKKCLLTLLPSEIIYEILYMLTIYDLYNISYPPTKV</sequence>
<keyword id="KW-0040">ANK repeat</keyword>
<keyword id="KW-0677">Repeat</keyword>
<organism>
    <name type="scientific">Variola virus</name>
    <dbReference type="NCBI Taxonomy" id="10255"/>
    <lineage>
        <taxon>Viruses</taxon>
        <taxon>Varidnaviria</taxon>
        <taxon>Bamfordvirae</taxon>
        <taxon>Nucleocytoviricota</taxon>
        <taxon>Pokkesviricetes</taxon>
        <taxon>Chitovirales</taxon>
        <taxon>Poxviridae</taxon>
        <taxon>Chordopoxvirinae</taxon>
        <taxon>Orthopoxvirus</taxon>
    </lineage>
</organism>
<evidence type="ECO:0000255" key="1">
    <source>
        <dbReference type="PROSITE-ProRule" id="PRU00080"/>
    </source>
</evidence>
<name>VB18_VARV</name>
<feature type="chain" id="PRO_0000448101" description="Ankyrin repeat protein B18">
    <location>
        <begin position="1"/>
        <end position="574"/>
    </location>
</feature>
<feature type="repeat" description="ANK 1">
    <location>
        <begin position="56"/>
        <end position="87"/>
    </location>
</feature>
<feature type="repeat" description="ANK 2">
    <location>
        <begin position="135"/>
        <end position="164"/>
    </location>
</feature>
<feature type="repeat" description="ANK 3">
    <location>
        <begin position="167"/>
        <end position="213"/>
    </location>
</feature>
<feature type="repeat" description="ANK 4">
    <location>
        <begin position="217"/>
        <end position="249"/>
    </location>
</feature>
<feature type="repeat" description="ANK 5">
    <location>
        <begin position="253"/>
        <end position="285"/>
    </location>
</feature>
<feature type="repeat" description="ANK 6">
    <location>
        <begin position="327"/>
        <end position="356"/>
    </location>
</feature>
<feature type="domain" description="F-box" evidence="1">
    <location>
        <begin position="541"/>
        <end position="574"/>
    </location>
</feature>
<accession>P0DSR6</accession>
<accession>P33824</accession>
<reference key="1">
    <citation type="journal article" date="1993" name="Nature">
        <title>Potential virulence determinants in terminal regions of variola smallpox virus genome.</title>
        <authorList>
            <person name="Massung R.F."/>
            <person name="Esposito J.J."/>
            <person name="Liu L.I."/>
            <person name="Qi J."/>
            <person name="Utterback T.R."/>
            <person name="Knight J.C."/>
            <person name="Aubin L."/>
            <person name="Yuran T.E."/>
            <person name="Parsons J.M."/>
            <person name="Loparev V.N."/>
            <person name="Selivanov N.A."/>
            <person name="Cavallaro K.F."/>
            <person name="Kerlavage A.R."/>
            <person name="Mahy B.W.J."/>
            <person name="Venter J.C."/>
        </authorList>
    </citation>
    <scope>NUCLEOTIDE SEQUENCE [GENOMIC DNA]</scope>
    <source>
        <strain>Bangladesh-1975</strain>
    </source>
</reference>
<proteinExistence type="predicted"/>
<gene>
    <name type="ORF">B16R</name>
    <name type="ORF">B18R</name>
    <name type="ORF">B19R</name>
</gene>
<dbReference type="EMBL" id="L22579">
    <property type="protein sequence ID" value="AAA60925.1"/>
    <property type="molecule type" value="Genomic_DNA"/>
</dbReference>
<dbReference type="PIR" id="T28615">
    <property type="entry name" value="T28615"/>
</dbReference>
<dbReference type="RefSeq" id="NP_042231.1">
    <property type="nucleotide sequence ID" value="NC_001611.1"/>
</dbReference>
<dbReference type="SMR" id="P0DSR6"/>
<dbReference type="GeneID" id="1486549"/>
<dbReference type="KEGG" id="vg:1486549"/>
<dbReference type="Proteomes" id="UP000119805">
    <property type="component" value="Segment"/>
</dbReference>
<dbReference type="Gene3D" id="1.25.40.20">
    <property type="entry name" value="Ankyrin repeat-containing domain"/>
    <property type="match status" value="3"/>
</dbReference>
<dbReference type="InterPro" id="IPR051637">
    <property type="entry name" value="Ank_repeat_dom-contain_49"/>
</dbReference>
<dbReference type="InterPro" id="IPR002110">
    <property type="entry name" value="Ankyrin_rpt"/>
</dbReference>
<dbReference type="InterPro" id="IPR036770">
    <property type="entry name" value="Ankyrin_rpt-contain_sf"/>
</dbReference>
<dbReference type="InterPro" id="IPR001810">
    <property type="entry name" value="F-box_dom"/>
</dbReference>
<dbReference type="InterPro" id="IPR018272">
    <property type="entry name" value="PRANC_domain"/>
</dbReference>
<dbReference type="PANTHER" id="PTHR24180">
    <property type="entry name" value="CYCLIN-DEPENDENT KINASE INHIBITOR 2C-RELATED"/>
    <property type="match status" value="1"/>
</dbReference>
<dbReference type="PANTHER" id="PTHR24180:SF45">
    <property type="entry name" value="POLY [ADP-RIBOSE] POLYMERASE TANKYRASE"/>
    <property type="match status" value="1"/>
</dbReference>
<dbReference type="Pfam" id="PF00023">
    <property type="entry name" value="Ank"/>
    <property type="match status" value="1"/>
</dbReference>
<dbReference type="Pfam" id="PF13606">
    <property type="entry name" value="Ank_3"/>
    <property type="match status" value="1"/>
</dbReference>
<dbReference type="Pfam" id="PF09372">
    <property type="entry name" value="PRANC"/>
    <property type="match status" value="1"/>
</dbReference>
<dbReference type="SMART" id="SM00248">
    <property type="entry name" value="ANK"/>
    <property type="match status" value="7"/>
</dbReference>
<dbReference type="SUPFAM" id="SSF48403">
    <property type="entry name" value="Ankyrin repeat"/>
    <property type="match status" value="1"/>
</dbReference>
<dbReference type="PROSITE" id="PS50297">
    <property type="entry name" value="ANK_REP_REGION"/>
    <property type="match status" value="1"/>
</dbReference>
<dbReference type="PROSITE" id="PS50088">
    <property type="entry name" value="ANK_REPEAT"/>
    <property type="match status" value="2"/>
</dbReference>
<dbReference type="PROSITE" id="PS50181">
    <property type="entry name" value="FBOX"/>
    <property type="match status" value="1"/>
</dbReference>
<protein>
    <recommendedName>
        <fullName>Ankyrin repeat protein B18</fullName>
    </recommendedName>
</protein>